<organism>
    <name type="scientific">Gossypium hirsutum</name>
    <name type="common">Upland cotton</name>
    <name type="synonym">Gossypium mexicanum</name>
    <dbReference type="NCBI Taxonomy" id="3635"/>
    <lineage>
        <taxon>Eukaryota</taxon>
        <taxon>Viridiplantae</taxon>
        <taxon>Streptophyta</taxon>
        <taxon>Embryophyta</taxon>
        <taxon>Tracheophyta</taxon>
        <taxon>Spermatophyta</taxon>
        <taxon>Magnoliopsida</taxon>
        <taxon>eudicotyledons</taxon>
        <taxon>Gunneridae</taxon>
        <taxon>Pentapetalae</taxon>
        <taxon>rosids</taxon>
        <taxon>malvids</taxon>
        <taxon>Malvales</taxon>
        <taxon>Malvaceae</taxon>
        <taxon>Malvoideae</taxon>
        <taxon>Gossypium</taxon>
    </lineage>
</organism>
<name>RK36_GOSHI</name>
<proteinExistence type="inferred from homology"/>
<reference key="1">
    <citation type="journal article" date="2006" name="BMC Genomics">
        <title>The complete chloroplast genome sequence of Gossypium hirsutum: organization and phylogenetic relationships to other angiosperms.</title>
        <authorList>
            <person name="Lee S.-B."/>
            <person name="Kaittanis C."/>
            <person name="Jansen R.K."/>
            <person name="Hostetler J.B."/>
            <person name="Tallon L.J."/>
            <person name="Town C.D."/>
            <person name="Daniell H."/>
        </authorList>
    </citation>
    <scope>NUCLEOTIDE SEQUENCE [LARGE SCALE GENOMIC DNA]</scope>
    <source>
        <strain>cv. Coker 310FR</strain>
    </source>
</reference>
<feature type="chain" id="PRO_0000276818" description="Large ribosomal subunit protein bL36c">
    <location>
        <begin position="1"/>
        <end position="37"/>
    </location>
</feature>
<comment type="subcellular location">
    <subcellularLocation>
        <location>Plastid</location>
        <location>Chloroplast</location>
    </subcellularLocation>
</comment>
<comment type="similarity">
    <text evidence="1">Belongs to the bacterial ribosomal protein bL36 family.</text>
</comment>
<dbReference type="EMBL" id="DQ345959">
    <property type="protein sequence ID" value="ABC73661.1"/>
    <property type="molecule type" value="Genomic_DNA"/>
</dbReference>
<dbReference type="RefSeq" id="YP_538970.1">
    <property type="nucleotide sequence ID" value="NC_007944.1"/>
</dbReference>
<dbReference type="SMR" id="Q2L936"/>
<dbReference type="GeneID" id="3989138"/>
<dbReference type="KEGG" id="ghi:3989138"/>
<dbReference type="Proteomes" id="UP000189702">
    <property type="component" value="Chloroplast Pltd"/>
</dbReference>
<dbReference type="GO" id="GO:0009507">
    <property type="term" value="C:chloroplast"/>
    <property type="evidence" value="ECO:0007669"/>
    <property type="project" value="UniProtKB-SubCell"/>
</dbReference>
<dbReference type="GO" id="GO:1990904">
    <property type="term" value="C:ribonucleoprotein complex"/>
    <property type="evidence" value="ECO:0007669"/>
    <property type="project" value="UniProtKB-KW"/>
</dbReference>
<dbReference type="GO" id="GO:0005840">
    <property type="term" value="C:ribosome"/>
    <property type="evidence" value="ECO:0007669"/>
    <property type="project" value="UniProtKB-KW"/>
</dbReference>
<dbReference type="GO" id="GO:0003735">
    <property type="term" value="F:structural constituent of ribosome"/>
    <property type="evidence" value="ECO:0007669"/>
    <property type="project" value="InterPro"/>
</dbReference>
<dbReference type="GO" id="GO:0006412">
    <property type="term" value="P:translation"/>
    <property type="evidence" value="ECO:0007669"/>
    <property type="project" value="UniProtKB-UniRule"/>
</dbReference>
<dbReference type="HAMAP" id="MF_00251">
    <property type="entry name" value="Ribosomal_bL36"/>
    <property type="match status" value="1"/>
</dbReference>
<dbReference type="InterPro" id="IPR000473">
    <property type="entry name" value="Ribosomal_bL36"/>
</dbReference>
<dbReference type="InterPro" id="IPR035977">
    <property type="entry name" value="Ribosomal_bL36_sp"/>
</dbReference>
<dbReference type="NCBIfam" id="TIGR01022">
    <property type="entry name" value="rpmJ_bact"/>
    <property type="match status" value="1"/>
</dbReference>
<dbReference type="PANTHER" id="PTHR42888">
    <property type="entry name" value="50S RIBOSOMAL PROTEIN L36, CHLOROPLASTIC"/>
    <property type="match status" value="1"/>
</dbReference>
<dbReference type="PANTHER" id="PTHR42888:SF1">
    <property type="entry name" value="LARGE RIBOSOMAL SUBUNIT PROTEIN BL36C"/>
    <property type="match status" value="1"/>
</dbReference>
<dbReference type="Pfam" id="PF00444">
    <property type="entry name" value="Ribosomal_L36"/>
    <property type="match status" value="1"/>
</dbReference>
<dbReference type="SUPFAM" id="SSF57840">
    <property type="entry name" value="Ribosomal protein L36"/>
    <property type="match status" value="1"/>
</dbReference>
<dbReference type="PROSITE" id="PS00828">
    <property type="entry name" value="RIBOSOMAL_L36"/>
    <property type="match status" value="1"/>
</dbReference>
<gene>
    <name evidence="1" type="primary">rpl36</name>
</gene>
<protein>
    <recommendedName>
        <fullName evidence="1">Large ribosomal subunit protein bL36c</fullName>
    </recommendedName>
    <alternativeName>
        <fullName evidence="2">50S ribosomal protein L36, chloroplastic</fullName>
    </alternativeName>
</protein>
<sequence length="37" mass="4521">MKIRASVRKICEKCRLIRRRGRIIVICFNPRHKQRQG</sequence>
<evidence type="ECO:0000255" key="1">
    <source>
        <dbReference type="HAMAP-Rule" id="MF_00251"/>
    </source>
</evidence>
<evidence type="ECO:0000305" key="2"/>
<geneLocation type="chloroplast"/>
<keyword id="KW-0150">Chloroplast</keyword>
<keyword id="KW-0934">Plastid</keyword>
<keyword id="KW-1185">Reference proteome</keyword>
<keyword id="KW-0687">Ribonucleoprotein</keyword>
<keyword id="KW-0689">Ribosomal protein</keyword>
<accession>Q2L936</accession>